<name>TILS_NITEU</name>
<protein>
    <recommendedName>
        <fullName evidence="1">tRNA(Ile)-lysidine synthase</fullName>
        <ecNumber evidence="1">6.3.4.19</ecNumber>
    </recommendedName>
    <alternativeName>
        <fullName evidence="1">tRNA(Ile)-2-lysyl-cytidine synthase</fullName>
    </alternativeName>
    <alternativeName>
        <fullName evidence="1">tRNA(Ile)-lysidine synthetase</fullName>
    </alternativeName>
</protein>
<reference key="1">
    <citation type="journal article" date="2003" name="J. Bacteriol.">
        <title>Complete genome sequence of the ammonia-oxidizing bacterium and obligate chemolithoautotroph Nitrosomonas europaea.</title>
        <authorList>
            <person name="Chain P."/>
            <person name="Lamerdin J.E."/>
            <person name="Larimer F.W."/>
            <person name="Regala W."/>
            <person name="Lao V."/>
            <person name="Land M.L."/>
            <person name="Hauser L."/>
            <person name="Hooper A.B."/>
            <person name="Klotz M.G."/>
            <person name="Norton J."/>
            <person name="Sayavedra-Soto L.A."/>
            <person name="Arciero D.M."/>
            <person name="Hommes N.G."/>
            <person name="Whittaker M.M."/>
            <person name="Arp D.J."/>
        </authorList>
    </citation>
    <scope>NUCLEOTIDE SEQUENCE [LARGE SCALE GENOMIC DNA]</scope>
    <source>
        <strain>ATCC 19718 / CIP 103999 / KCTC 2705 / NBRC 14298</strain>
    </source>
</reference>
<gene>
    <name evidence="1" type="primary">tilS</name>
    <name type="ordered locus">NE1022</name>
</gene>
<proteinExistence type="inferred from homology"/>
<evidence type="ECO:0000255" key="1">
    <source>
        <dbReference type="HAMAP-Rule" id="MF_01161"/>
    </source>
</evidence>
<feature type="chain" id="PRO_0000181735" description="tRNA(Ile)-lysidine synthase">
    <location>
        <begin position="1"/>
        <end position="458"/>
    </location>
</feature>
<feature type="binding site" evidence="1">
    <location>
        <begin position="35"/>
        <end position="40"/>
    </location>
    <ligand>
        <name>ATP</name>
        <dbReference type="ChEBI" id="CHEBI:30616"/>
    </ligand>
</feature>
<comment type="function">
    <text evidence="1">Ligates lysine onto the cytidine present at position 34 of the AUA codon-specific tRNA(Ile) that contains the anticodon CAU, in an ATP-dependent manner. Cytidine is converted to lysidine, thus changing the amino acid specificity of the tRNA from methionine to isoleucine.</text>
</comment>
<comment type="catalytic activity">
    <reaction evidence="1">
        <text>cytidine(34) in tRNA(Ile2) + L-lysine + ATP = lysidine(34) in tRNA(Ile2) + AMP + diphosphate + H(+)</text>
        <dbReference type="Rhea" id="RHEA:43744"/>
        <dbReference type="Rhea" id="RHEA-COMP:10625"/>
        <dbReference type="Rhea" id="RHEA-COMP:10670"/>
        <dbReference type="ChEBI" id="CHEBI:15378"/>
        <dbReference type="ChEBI" id="CHEBI:30616"/>
        <dbReference type="ChEBI" id="CHEBI:32551"/>
        <dbReference type="ChEBI" id="CHEBI:33019"/>
        <dbReference type="ChEBI" id="CHEBI:82748"/>
        <dbReference type="ChEBI" id="CHEBI:83665"/>
        <dbReference type="ChEBI" id="CHEBI:456215"/>
        <dbReference type="EC" id="6.3.4.19"/>
    </reaction>
</comment>
<comment type="subcellular location">
    <subcellularLocation>
        <location evidence="1">Cytoplasm</location>
    </subcellularLocation>
</comment>
<comment type="domain">
    <text>The N-terminal region contains the highly conserved SGGXDS motif, predicted to be a P-loop motif involved in ATP binding.</text>
</comment>
<comment type="similarity">
    <text evidence="1">Belongs to the tRNA(Ile)-lysidine synthase family.</text>
</comment>
<dbReference type="EC" id="6.3.4.19" evidence="1"/>
<dbReference type="EMBL" id="AL954747">
    <property type="protein sequence ID" value="CAD84933.1"/>
    <property type="molecule type" value="Genomic_DNA"/>
</dbReference>
<dbReference type="RefSeq" id="WP_011111631.1">
    <property type="nucleotide sequence ID" value="NC_004757.1"/>
</dbReference>
<dbReference type="SMR" id="Q82VP4"/>
<dbReference type="STRING" id="228410.NE1022"/>
<dbReference type="GeneID" id="87104213"/>
<dbReference type="KEGG" id="neu:NE1022"/>
<dbReference type="eggNOG" id="COG0037">
    <property type="taxonomic scope" value="Bacteria"/>
</dbReference>
<dbReference type="HOGENOM" id="CLU_018869_2_0_4"/>
<dbReference type="OrthoDB" id="9807403at2"/>
<dbReference type="PhylomeDB" id="Q82VP4"/>
<dbReference type="Proteomes" id="UP000001416">
    <property type="component" value="Chromosome"/>
</dbReference>
<dbReference type="GO" id="GO:0005737">
    <property type="term" value="C:cytoplasm"/>
    <property type="evidence" value="ECO:0007669"/>
    <property type="project" value="UniProtKB-SubCell"/>
</dbReference>
<dbReference type="GO" id="GO:0005524">
    <property type="term" value="F:ATP binding"/>
    <property type="evidence" value="ECO:0007669"/>
    <property type="project" value="UniProtKB-UniRule"/>
</dbReference>
<dbReference type="GO" id="GO:0032267">
    <property type="term" value="F:tRNA(Ile)-lysidine synthase activity"/>
    <property type="evidence" value="ECO:0007669"/>
    <property type="project" value="UniProtKB-EC"/>
</dbReference>
<dbReference type="GO" id="GO:0006400">
    <property type="term" value="P:tRNA modification"/>
    <property type="evidence" value="ECO:0007669"/>
    <property type="project" value="UniProtKB-UniRule"/>
</dbReference>
<dbReference type="CDD" id="cd01992">
    <property type="entry name" value="TilS_N"/>
    <property type="match status" value="1"/>
</dbReference>
<dbReference type="Gene3D" id="1.20.59.20">
    <property type="match status" value="1"/>
</dbReference>
<dbReference type="Gene3D" id="3.40.50.620">
    <property type="entry name" value="HUPs"/>
    <property type="match status" value="1"/>
</dbReference>
<dbReference type="HAMAP" id="MF_01161">
    <property type="entry name" value="tRNA_Ile_lys_synt"/>
    <property type="match status" value="1"/>
</dbReference>
<dbReference type="InterPro" id="IPR012796">
    <property type="entry name" value="Lysidine-tRNA-synth_C"/>
</dbReference>
<dbReference type="InterPro" id="IPR014729">
    <property type="entry name" value="Rossmann-like_a/b/a_fold"/>
</dbReference>
<dbReference type="InterPro" id="IPR011063">
    <property type="entry name" value="TilS/TtcA_N"/>
</dbReference>
<dbReference type="InterPro" id="IPR012094">
    <property type="entry name" value="tRNA_Ile_lys_synt"/>
</dbReference>
<dbReference type="InterPro" id="IPR012795">
    <property type="entry name" value="tRNA_Ile_lys_synt_N"/>
</dbReference>
<dbReference type="InterPro" id="IPR015262">
    <property type="entry name" value="tRNA_Ile_lys_synt_subst-bd"/>
</dbReference>
<dbReference type="NCBIfam" id="TIGR02433">
    <property type="entry name" value="lysidine_TilS_C"/>
    <property type="match status" value="1"/>
</dbReference>
<dbReference type="NCBIfam" id="TIGR02432">
    <property type="entry name" value="lysidine_TilS_N"/>
    <property type="match status" value="1"/>
</dbReference>
<dbReference type="PANTHER" id="PTHR43033">
    <property type="entry name" value="TRNA(ILE)-LYSIDINE SYNTHASE-RELATED"/>
    <property type="match status" value="1"/>
</dbReference>
<dbReference type="PANTHER" id="PTHR43033:SF1">
    <property type="entry name" value="TRNA(ILE)-LYSIDINE SYNTHASE-RELATED"/>
    <property type="match status" value="1"/>
</dbReference>
<dbReference type="Pfam" id="PF01171">
    <property type="entry name" value="ATP_bind_3"/>
    <property type="match status" value="1"/>
</dbReference>
<dbReference type="Pfam" id="PF09179">
    <property type="entry name" value="TilS"/>
    <property type="match status" value="1"/>
</dbReference>
<dbReference type="Pfam" id="PF11734">
    <property type="entry name" value="TilS_C"/>
    <property type="match status" value="1"/>
</dbReference>
<dbReference type="SMART" id="SM00977">
    <property type="entry name" value="TilS_C"/>
    <property type="match status" value="1"/>
</dbReference>
<dbReference type="SUPFAM" id="SSF52402">
    <property type="entry name" value="Adenine nucleotide alpha hydrolases-like"/>
    <property type="match status" value="1"/>
</dbReference>
<dbReference type="SUPFAM" id="SSF82829">
    <property type="entry name" value="MesJ substrate recognition domain-like"/>
    <property type="match status" value="1"/>
</dbReference>
<dbReference type="SUPFAM" id="SSF56037">
    <property type="entry name" value="PheT/TilS domain"/>
    <property type="match status" value="1"/>
</dbReference>
<organism>
    <name type="scientific">Nitrosomonas europaea (strain ATCC 19718 / CIP 103999 / KCTC 2705 / NBRC 14298)</name>
    <dbReference type="NCBI Taxonomy" id="228410"/>
    <lineage>
        <taxon>Bacteria</taxon>
        <taxon>Pseudomonadati</taxon>
        <taxon>Pseudomonadota</taxon>
        <taxon>Betaproteobacteria</taxon>
        <taxon>Nitrosomonadales</taxon>
        <taxon>Nitrosomonadaceae</taxon>
        <taxon>Nitrosomonas</taxon>
    </lineage>
</organism>
<sequence length="458" mass="51933">MADSKSISPTDITDCFFHNLRAQVRPGDRLTVALSGGVDSVVLLHLLTTFSESMQLEVSAVHVEHGISTYSGEWSAFCQSLCDSLAIPLSIHRLKIRRRPQESLEAIAREARYQIFKHIQADYVMLAQHQDDQVETLILQLLRGAGVKGLSAMPTVRLLEPGKTIRLFRPLLNIPRSEILNYARLHGLSWVTDESNLDTSYDRNFLRHQILPLLEQRSPAYRKTLFRSTQHLGEAAHLLDELAEIDAENTLVTNRLSLQGLRKLEPARARNLLRYLLAQRLIRLPNSTKLEEILRQLNNIQPDNHFRFIVDTLEIRCHRGLIEFLPADSLPEPIAPVVWQGEQHLVIESLQGVLKFTRQNNMGIDPARLSGQIVTIRSRSGGERFQPDCKRPRRSLKKILQEAALAPWVRNTLPLLFCEDQLVWVAGIGIDCNFQISEGSTGLVVAWHPSQINQVSTH</sequence>
<keyword id="KW-0067">ATP-binding</keyword>
<keyword id="KW-0963">Cytoplasm</keyword>
<keyword id="KW-0436">Ligase</keyword>
<keyword id="KW-0547">Nucleotide-binding</keyword>
<keyword id="KW-1185">Reference proteome</keyword>
<keyword id="KW-0819">tRNA processing</keyword>
<accession>Q82VP4</accession>